<gene>
    <name evidence="1" type="primary">csrA</name>
    <name type="ordered locus">BUAP5A_397</name>
</gene>
<comment type="function">
    <text evidence="1">A key translational regulator that binds mRNA to regulate translation initiation and/or mRNA stability. Mediates global changes in gene expression, shifting from rapid growth to stress survival by linking envelope stress, the stringent response and the catabolite repression systems. Usually binds in the 5'-UTR; binding at or near the Shine-Dalgarno sequence prevents ribosome-binding, repressing translation, binding elsewhere in the 5'-UTR can activate translation and/or stabilize the mRNA. Its function is antagonized by small RNA(s).</text>
</comment>
<comment type="subunit">
    <text evidence="1">Homodimer; the beta-strands of each monomer intercalate to form a hydrophobic core, while the alpha-helices form wings that extend away from the core.</text>
</comment>
<comment type="subcellular location">
    <subcellularLocation>
        <location evidence="1">Cytoplasm</location>
    </subcellularLocation>
</comment>
<comment type="similarity">
    <text evidence="1">Belongs to the CsrA/RsmA family.</text>
</comment>
<evidence type="ECO:0000255" key="1">
    <source>
        <dbReference type="HAMAP-Rule" id="MF_00167"/>
    </source>
</evidence>
<name>CSRA_BUCA5</name>
<reference key="1">
    <citation type="journal article" date="2009" name="Science">
        <title>The dynamics and time scale of ongoing genomic erosion in symbiotic bacteria.</title>
        <authorList>
            <person name="Moran N.A."/>
            <person name="McLaughlin H.J."/>
            <person name="Sorek R."/>
        </authorList>
    </citation>
    <scope>NUCLEOTIDE SEQUENCE [LARGE SCALE GENOMIC DNA]</scope>
    <source>
        <strain>5A</strain>
    </source>
</reference>
<proteinExistence type="inferred from homology"/>
<keyword id="KW-0010">Activator</keyword>
<keyword id="KW-0963">Cytoplasm</keyword>
<keyword id="KW-0678">Repressor</keyword>
<keyword id="KW-0694">RNA-binding</keyword>
<keyword id="KW-0810">Translation regulation</keyword>
<sequence>MLILTRRVGETLIIGDEITVTVLGVKGNQVRIGVNAPKEVSVHREEIYQRIQAEKKK</sequence>
<protein>
    <recommendedName>
        <fullName evidence="1">Translational regulator CsrA</fullName>
    </recommendedName>
    <alternativeName>
        <fullName evidence="1">Carbon storage regulator</fullName>
    </alternativeName>
</protein>
<feature type="chain" id="PRO_1000123618" description="Translational regulator CsrA">
    <location>
        <begin position="1"/>
        <end position="57"/>
    </location>
</feature>
<organism>
    <name type="scientific">Buchnera aphidicola subsp. Acyrthosiphon pisum (strain 5A)</name>
    <dbReference type="NCBI Taxonomy" id="563178"/>
    <lineage>
        <taxon>Bacteria</taxon>
        <taxon>Pseudomonadati</taxon>
        <taxon>Pseudomonadota</taxon>
        <taxon>Gammaproteobacteria</taxon>
        <taxon>Enterobacterales</taxon>
        <taxon>Erwiniaceae</taxon>
        <taxon>Buchnera</taxon>
    </lineage>
</organism>
<accession>B8D9I7</accession>
<dbReference type="EMBL" id="CP001161">
    <property type="protein sequence ID" value="ACL30758.1"/>
    <property type="molecule type" value="Genomic_DNA"/>
</dbReference>
<dbReference type="RefSeq" id="WP_009874362.1">
    <property type="nucleotide sequence ID" value="NC_011833.1"/>
</dbReference>
<dbReference type="SMR" id="B8D9I7"/>
<dbReference type="KEGG" id="bap:BUAP5A_397"/>
<dbReference type="HOGENOM" id="CLU_164837_2_1_6"/>
<dbReference type="OrthoDB" id="9809061at2"/>
<dbReference type="Proteomes" id="UP000006904">
    <property type="component" value="Chromosome"/>
</dbReference>
<dbReference type="GO" id="GO:0005829">
    <property type="term" value="C:cytosol"/>
    <property type="evidence" value="ECO:0007669"/>
    <property type="project" value="TreeGrafter"/>
</dbReference>
<dbReference type="GO" id="GO:0048027">
    <property type="term" value="F:mRNA 5'-UTR binding"/>
    <property type="evidence" value="ECO:0007669"/>
    <property type="project" value="UniProtKB-UniRule"/>
</dbReference>
<dbReference type="GO" id="GO:0006402">
    <property type="term" value="P:mRNA catabolic process"/>
    <property type="evidence" value="ECO:0007669"/>
    <property type="project" value="InterPro"/>
</dbReference>
<dbReference type="GO" id="GO:0045947">
    <property type="term" value="P:negative regulation of translational initiation"/>
    <property type="evidence" value="ECO:0007669"/>
    <property type="project" value="UniProtKB-UniRule"/>
</dbReference>
<dbReference type="GO" id="GO:0045948">
    <property type="term" value="P:positive regulation of translational initiation"/>
    <property type="evidence" value="ECO:0007669"/>
    <property type="project" value="UniProtKB-UniRule"/>
</dbReference>
<dbReference type="GO" id="GO:0006109">
    <property type="term" value="P:regulation of carbohydrate metabolic process"/>
    <property type="evidence" value="ECO:0007669"/>
    <property type="project" value="UniProtKB-UniRule"/>
</dbReference>
<dbReference type="FunFam" id="2.60.40.4380:FF:000001">
    <property type="entry name" value="Translational regulator CsrA"/>
    <property type="match status" value="1"/>
</dbReference>
<dbReference type="Gene3D" id="2.60.40.4380">
    <property type="entry name" value="Translational regulator CsrA"/>
    <property type="match status" value="1"/>
</dbReference>
<dbReference type="HAMAP" id="MF_00167">
    <property type="entry name" value="CsrA"/>
    <property type="match status" value="1"/>
</dbReference>
<dbReference type="InterPro" id="IPR003751">
    <property type="entry name" value="CsrA"/>
</dbReference>
<dbReference type="InterPro" id="IPR036107">
    <property type="entry name" value="CsrA_sf"/>
</dbReference>
<dbReference type="NCBIfam" id="TIGR00202">
    <property type="entry name" value="csrA"/>
    <property type="match status" value="1"/>
</dbReference>
<dbReference type="NCBIfam" id="NF002469">
    <property type="entry name" value="PRK01712.1"/>
    <property type="match status" value="1"/>
</dbReference>
<dbReference type="PANTHER" id="PTHR34984">
    <property type="entry name" value="CARBON STORAGE REGULATOR"/>
    <property type="match status" value="1"/>
</dbReference>
<dbReference type="PANTHER" id="PTHR34984:SF1">
    <property type="entry name" value="CARBON STORAGE REGULATOR"/>
    <property type="match status" value="1"/>
</dbReference>
<dbReference type="Pfam" id="PF02599">
    <property type="entry name" value="CsrA"/>
    <property type="match status" value="1"/>
</dbReference>
<dbReference type="SUPFAM" id="SSF117130">
    <property type="entry name" value="CsrA-like"/>
    <property type="match status" value="1"/>
</dbReference>